<accession>B5FI84</accession>
<proteinExistence type="inferred from homology"/>
<organism>
    <name type="scientific">Salmonella dublin (strain CT_02021853)</name>
    <dbReference type="NCBI Taxonomy" id="439851"/>
    <lineage>
        <taxon>Bacteria</taxon>
        <taxon>Pseudomonadati</taxon>
        <taxon>Pseudomonadota</taxon>
        <taxon>Gammaproteobacteria</taxon>
        <taxon>Enterobacterales</taxon>
        <taxon>Enterobacteriaceae</taxon>
        <taxon>Salmonella</taxon>
    </lineage>
</organism>
<reference key="1">
    <citation type="journal article" date="2011" name="J. Bacteriol.">
        <title>Comparative genomics of 28 Salmonella enterica isolates: evidence for CRISPR-mediated adaptive sublineage evolution.</title>
        <authorList>
            <person name="Fricke W.F."/>
            <person name="Mammel M.K."/>
            <person name="McDermott P.F."/>
            <person name="Tartera C."/>
            <person name="White D.G."/>
            <person name="Leclerc J.E."/>
            <person name="Ravel J."/>
            <person name="Cebula T.A."/>
        </authorList>
    </citation>
    <scope>NUCLEOTIDE SEQUENCE [LARGE SCALE GENOMIC DNA]</scope>
    <source>
        <strain>CT_02021853</strain>
    </source>
</reference>
<keyword id="KW-0131">Cell cycle</keyword>
<keyword id="KW-0132">Cell division</keyword>
<keyword id="KW-0963">Cytoplasm</keyword>
<keyword id="KW-0717">Septation</keyword>
<name>ZAPD_SALDC</name>
<gene>
    <name evidence="1" type="primary">zapD</name>
    <name type="ordered locus">SeD_A0150</name>
</gene>
<evidence type="ECO:0000255" key="1">
    <source>
        <dbReference type="HAMAP-Rule" id="MF_01092"/>
    </source>
</evidence>
<dbReference type="EMBL" id="CP001144">
    <property type="protein sequence ID" value="ACH74378.1"/>
    <property type="molecule type" value="Genomic_DNA"/>
</dbReference>
<dbReference type="RefSeq" id="WP_000557441.1">
    <property type="nucleotide sequence ID" value="NC_011205.1"/>
</dbReference>
<dbReference type="SMR" id="B5FI84"/>
<dbReference type="KEGG" id="sed:SeD_A0150"/>
<dbReference type="HOGENOM" id="CLU_076303_0_0_6"/>
<dbReference type="Proteomes" id="UP000008322">
    <property type="component" value="Chromosome"/>
</dbReference>
<dbReference type="GO" id="GO:0032153">
    <property type="term" value="C:cell division site"/>
    <property type="evidence" value="ECO:0007669"/>
    <property type="project" value="TreeGrafter"/>
</dbReference>
<dbReference type="GO" id="GO:0005737">
    <property type="term" value="C:cytoplasm"/>
    <property type="evidence" value="ECO:0007669"/>
    <property type="project" value="UniProtKB-SubCell"/>
</dbReference>
<dbReference type="GO" id="GO:0000917">
    <property type="term" value="P:division septum assembly"/>
    <property type="evidence" value="ECO:0007669"/>
    <property type="project" value="UniProtKB-KW"/>
</dbReference>
<dbReference type="GO" id="GO:0043093">
    <property type="term" value="P:FtsZ-dependent cytokinesis"/>
    <property type="evidence" value="ECO:0007669"/>
    <property type="project" value="UniProtKB-UniRule"/>
</dbReference>
<dbReference type="FunFam" id="1.10.3900.10:FF:000001">
    <property type="entry name" value="Cell division protein ZapD"/>
    <property type="match status" value="1"/>
</dbReference>
<dbReference type="FunFam" id="2.60.440.10:FF:000001">
    <property type="entry name" value="Cell division protein ZapD"/>
    <property type="match status" value="1"/>
</dbReference>
<dbReference type="Gene3D" id="1.10.3900.10">
    <property type="entry name" value="YacF-like"/>
    <property type="match status" value="1"/>
</dbReference>
<dbReference type="Gene3D" id="2.60.440.10">
    <property type="entry name" value="YacF-like domains"/>
    <property type="match status" value="1"/>
</dbReference>
<dbReference type="HAMAP" id="MF_01092">
    <property type="entry name" value="ZapD"/>
    <property type="match status" value="1"/>
</dbReference>
<dbReference type="InterPro" id="IPR009777">
    <property type="entry name" value="ZapD"/>
</dbReference>
<dbReference type="InterPro" id="IPR027462">
    <property type="entry name" value="ZapD_C"/>
</dbReference>
<dbReference type="InterPro" id="IPR036268">
    <property type="entry name" value="ZapD_sf"/>
</dbReference>
<dbReference type="NCBIfam" id="NF003653">
    <property type="entry name" value="PRK05287.1-1"/>
    <property type="match status" value="1"/>
</dbReference>
<dbReference type="NCBIfam" id="NF003655">
    <property type="entry name" value="PRK05287.1-3"/>
    <property type="match status" value="1"/>
</dbReference>
<dbReference type="PANTHER" id="PTHR39455">
    <property type="entry name" value="CELL DIVISION PROTEIN ZAPD"/>
    <property type="match status" value="1"/>
</dbReference>
<dbReference type="PANTHER" id="PTHR39455:SF1">
    <property type="entry name" value="CELL DIVISION PROTEIN ZAPD"/>
    <property type="match status" value="1"/>
</dbReference>
<dbReference type="Pfam" id="PF07072">
    <property type="entry name" value="ZapD"/>
    <property type="match status" value="1"/>
</dbReference>
<dbReference type="SUPFAM" id="SSF160950">
    <property type="entry name" value="YacF-like"/>
    <property type="match status" value="1"/>
</dbReference>
<protein>
    <recommendedName>
        <fullName evidence="1">Cell division protein ZapD</fullName>
    </recommendedName>
    <alternativeName>
        <fullName evidence="1">Z ring-associated protein D</fullName>
    </alternativeName>
</protein>
<feature type="chain" id="PRO_1000136949" description="Cell division protein ZapD">
    <location>
        <begin position="1"/>
        <end position="247"/>
    </location>
</feature>
<comment type="function">
    <text evidence="1">Cell division factor that enhances FtsZ-ring assembly. Directly interacts with FtsZ and promotes bundling of FtsZ protofilaments, with a reduction in FtsZ GTPase activity.</text>
</comment>
<comment type="subunit">
    <text evidence="1">Interacts with FtsZ.</text>
</comment>
<comment type="subcellular location">
    <subcellularLocation>
        <location evidence="1">Cytoplasm</location>
    </subcellularLocation>
    <text evidence="1">Localizes to mid-cell in an FtsZ-dependent manner.</text>
</comment>
<comment type="similarity">
    <text evidence="1">Belongs to the ZapD family.</text>
</comment>
<sequence>MHTQVLFEHPLNEKMRTWLRIEFLIQQLSINLPIADHAGALHFFRNISDLLDVFERGEVRTELLKELERQQRKLQAWVEVPGVDQDRIEALRQQLKSAGSVLISAPRIGQQLREDRLIALVRQRLSIPGGCCSFDLPTLHIWLHLQQAQRDAQIESWLASLNPLTQALTLVLDLIRNSAPFRKQTSLNGFYQDNGDDADLLRLMLTLDSQLYPQISGHKSRFAIRFMPLDSENGLVPERLDFELACC</sequence>